<protein>
    <recommendedName>
        <fullName evidence="1">Large ribosomal subunit protein bL28</fullName>
    </recommendedName>
    <alternativeName>
        <fullName evidence="2">50S ribosomal protein L28</fullName>
    </alternativeName>
</protein>
<name>RL28_RICRS</name>
<proteinExistence type="inferred from homology"/>
<organism>
    <name type="scientific">Rickettsia rickettsii (strain Sheila Smith)</name>
    <dbReference type="NCBI Taxonomy" id="392021"/>
    <lineage>
        <taxon>Bacteria</taxon>
        <taxon>Pseudomonadati</taxon>
        <taxon>Pseudomonadota</taxon>
        <taxon>Alphaproteobacteria</taxon>
        <taxon>Rickettsiales</taxon>
        <taxon>Rickettsiaceae</taxon>
        <taxon>Rickettsieae</taxon>
        <taxon>Rickettsia</taxon>
        <taxon>spotted fever group</taxon>
    </lineage>
</organism>
<keyword id="KW-0687">Ribonucleoprotein</keyword>
<keyword id="KW-0689">Ribosomal protein</keyword>
<gene>
    <name evidence="1" type="primary">rpmB</name>
    <name type="ordered locus">A1G_00790</name>
</gene>
<reference key="1">
    <citation type="submission" date="2007-09" db="EMBL/GenBank/DDBJ databases">
        <title>Complete genome sequence of Rickettsia rickettsii.</title>
        <authorList>
            <person name="Madan A."/>
            <person name="Fahey J."/>
            <person name="Helton E."/>
            <person name="Ketteman M."/>
            <person name="Madan A."/>
            <person name="Rodrigues S."/>
            <person name="Sanchez A."/>
            <person name="Dasch G."/>
            <person name="Eremeeva M."/>
        </authorList>
    </citation>
    <scope>NUCLEOTIDE SEQUENCE [LARGE SCALE GENOMIC DNA]</scope>
    <source>
        <strain>Sheila Smith</strain>
    </source>
</reference>
<comment type="similarity">
    <text evidence="1">Belongs to the bacterial ribosomal protein bL28 family.</text>
</comment>
<dbReference type="EMBL" id="CP000848">
    <property type="protein sequence ID" value="ABV75744.1"/>
    <property type="molecule type" value="Genomic_DNA"/>
</dbReference>
<dbReference type="RefSeq" id="WP_012150358.1">
    <property type="nucleotide sequence ID" value="NZ_CP121767.1"/>
</dbReference>
<dbReference type="SMR" id="A8GQR9"/>
<dbReference type="GeneID" id="79936930"/>
<dbReference type="KEGG" id="rri:A1G_00790"/>
<dbReference type="HOGENOM" id="CLU_064548_4_2_5"/>
<dbReference type="Proteomes" id="UP000006832">
    <property type="component" value="Chromosome"/>
</dbReference>
<dbReference type="GO" id="GO:1990904">
    <property type="term" value="C:ribonucleoprotein complex"/>
    <property type="evidence" value="ECO:0007669"/>
    <property type="project" value="UniProtKB-KW"/>
</dbReference>
<dbReference type="GO" id="GO:0005840">
    <property type="term" value="C:ribosome"/>
    <property type="evidence" value="ECO:0007669"/>
    <property type="project" value="UniProtKB-KW"/>
</dbReference>
<dbReference type="GO" id="GO:0003735">
    <property type="term" value="F:structural constituent of ribosome"/>
    <property type="evidence" value="ECO:0007669"/>
    <property type="project" value="InterPro"/>
</dbReference>
<dbReference type="GO" id="GO:0006412">
    <property type="term" value="P:translation"/>
    <property type="evidence" value="ECO:0007669"/>
    <property type="project" value="UniProtKB-UniRule"/>
</dbReference>
<dbReference type="Gene3D" id="2.30.170.40">
    <property type="entry name" value="Ribosomal protein L28/L24"/>
    <property type="match status" value="1"/>
</dbReference>
<dbReference type="HAMAP" id="MF_00373">
    <property type="entry name" value="Ribosomal_bL28"/>
    <property type="match status" value="1"/>
</dbReference>
<dbReference type="InterPro" id="IPR026569">
    <property type="entry name" value="Ribosomal_bL28"/>
</dbReference>
<dbReference type="InterPro" id="IPR034704">
    <property type="entry name" value="Ribosomal_bL28/bL31-like_sf"/>
</dbReference>
<dbReference type="InterPro" id="IPR001383">
    <property type="entry name" value="Ribosomal_bL28_bact-type"/>
</dbReference>
<dbReference type="InterPro" id="IPR037147">
    <property type="entry name" value="Ribosomal_bL28_sf"/>
</dbReference>
<dbReference type="NCBIfam" id="TIGR00009">
    <property type="entry name" value="L28"/>
    <property type="match status" value="1"/>
</dbReference>
<dbReference type="PANTHER" id="PTHR13528">
    <property type="entry name" value="39S RIBOSOMAL PROTEIN L28, MITOCHONDRIAL"/>
    <property type="match status" value="1"/>
</dbReference>
<dbReference type="PANTHER" id="PTHR13528:SF2">
    <property type="entry name" value="LARGE RIBOSOMAL SUBUNIT PROTEIN BL28M"/>
    <property type="match status" value="1"/>
</dbReference>
<dbReference type="Pfam" id="PF00830">
    <property type="entry name" value="Ribosomal_L28"/>
    <property type="match status" value="1"/>
</dbReference>
<dbReference type="SUPFAM" id="SSF143800">
    <property type="entry name" value="L28p-like"/>
    <property type="match status" value="1"/>
</dbReference>
<evidence type="ECO:0000255" key="1">
    <source>
        <dbReference type="HAMAP-Rule" id="MF_00373"/>
    </source>
</evidence>
<evidence type="ECO:0000305" key="2"/>
<feature type="chain" id="PRO_1000007339" description="Large ribosomal subunit protein bL28">
    <location>
        <begin position="1"/>
        <end position="97"/>
    </location>
</feature>
<sequence>MSRKCELTGVGVLYGNNVSHSQRKTRRRFEPNLRSVKFTSDITAGEYRLSVNARCISSVEKAGGFDAYILKADDNVLSGNARAIKKKIIQTKTAKSL</sequence>
<accession>A8GQR9</accession>